<feature type="signal peptide" evidence="1">
    <location>
        <begin position="1"/>
        <end position="18"/>
    </location>
</feature>
<feature type="chain" id="PRO_5000130983" description="LPS-assembly protein LptD">
    <location>
        <begin position="19"/>
        <end position="766"/>
    </location>
</feature>
<protein>
    <recommendedName>
        <fullName evidence="1">LPS-assembly protein LptD</fullName>
    </recommendedName>
</protein>
<gene>
    <name evidence="1" type="primary">lptD</name>
    <name type="synonym">imp</name>
    <name type="synonym">ostA</name>
    <name type="ordered locus">Sfri_3076</name>
</gene>
<dbReference type="EMBL" id="CP000447">
    <property type="protein sequence ID" value="ABI72913.1"/>
    <property type="molecule type" value="Genomic_DNA"/>
</dbReference>
<dbReference type="RefSeq" id="WP_011638519.1">
    <property type="nucleotide sequence ID" value="NC_008345.1"/>
</dbReference>
<dbReference type="SMR" id="Q07YK1"/>
<dbReference type="STRING" id="318167.Sfri_3076"/>
<dbReference type="KEGG" id="sfr:Sfri_3076"/>
<dbReference type="eggNOG" id="COG1452">
    <property type="taxonomic scope" value="Bacteria"/>
</dbReference>
<dbReference type="HOGENOM" id="CLU_009039_2_0_6"/>
<dbReference type="OrthoDB" id="9760225at2"/>
<dbReference type="Proteomes" id="UP000000684">
    <property type="component" value="Chromosome"/>
</dbReference>
<dbReference type="GO" id="GO:0009279">
    <property type="term" value="C:cell outer membrane"/>
    <property type="evidence" value="ECO:0007669"/>
    <property type="project" value="UniProtKB-SubCell"/>
</dbReference>
<dbReference type="GO" id="GO:1990351">
    <property type="term" value="C:transporter complex"/>
    <property type="evidence" value="ECO:0007669"/>
    <property type="project" value="TreeGrafter"/>
</dbReference>
<dbReference type="GO" id="GO:0043165">
    <property type="term" value="P:Gram-negative-bacterium-type cell outer membrane assembly"/>
    <property type="evidence" value="ECO:0007669"/>
    <property type="project" value="UniProtKB-UniRule"/>
</dbReference>
<dbReference type="GO" id="GO:0015920">
    <property type="term" value="P:lipopolysaccharide transport"/>
    <property type="evidence" value="ECO:0007669"/>
    <property type="project" value="InterPro"/>
</dbReference>
<dbReference type="Gene3D" id="2.60.450.10">
    <property type="entry name" value="Lipopolysaccharide (LPS) transport protein A like domain"/>
    <property type="match status" value="1"/>
</dbReference>
<dbReference type="HAMAP" id="MF_01411">
    <property type="entry name" value="LPS_assembly_LptD"/>
    <property type="match status" value="1"/>
</dbReference>
<dbReference type="InterPro" id="IPR020889">
    <property type="entry name" value="LipoPS_assembly_LptD"/>
</dbReference>
<dbReference type="InterPro" id="IPR050218">
    <property type="entry name" value="LptD"/>
</dbReference>
<dbReference type="InterPro" id="IPR007543">
    <property type="entry name" value="LptD_C"/>
</dbReference>
<dbReference type="InterPro" id="IPR005653">
    <property type="entry name" value="OstA-like_N"/>
</dbReference>
<dbReference type="NCBIfam" id="NF002997">
    <property type="entry name" value="PRK03761.1"/>
    <property type="match status" value="1"/>
</dbReference>
<dbReference type="PANTHER" id="PTHR30189">
    <property type="entry name" value="LPS-ASSEMBLY PROTEIN"/>
    <property type="match status" value="1"/>
</dbReference>
<dbReference type="PANTHER" id="PTHR30189:SF1">
    <property type="entry name" value="LPS-ASSEMBLY PROTEIN LPTD"/>
    <property type="match status" value="1"/>
</dbReference>
<dbReference type="Pfam" id="PF04453">
    <property type="entry name" value="LptD"/>
    <property type="match status" value="1"/>
</dbReference>
<dbReference type="Pfam" id="PF03968">
    <property type="entry name" value="LptD_N"/>
    <property type="match status" value="1"/>
</dbReference>
<evidence type="ECO:0000255" key="1">
    <source>
        <dbReference type="HAMAP-Rule" id="MF_01411"/>
    </source>
</evidence>
<reference key="1">
    <citation type="submission" date="2006-08" db="EMBL/GenBank/DDBJ databases">
        <title>Complete sequence of Shewanella frigidimarina NCIMB 400.</title>
        <authorList>
            <consortium name="US DOE Joint Genome Institute"/>
            <person name="Copeland A."/>
            <person name="Lucas S."/>
            <person name="Lapidus A."/>
            <person name="Barry K."/>
            <person name="Detter J.C."/>
            <person name="Glavina del Rio T."/>
            <person name="Hammon N."/>
            <person name="Israni S."/>
            <person name="Dalin E."/>
            <person name="Tice H."/>
            <person name="Pitluck S."/>
            <person name="Fredrickson J.K."/>
            <person name="Kolker E."/>
            <person name="McCuel L.A."/>
            <person name="DiChristina T."/>
            <person name="Nealson K.H."/>
            <person name="Newman D."/>
            <person name="Tiedje J.M."/>
            <person name="Zhou J."/>
            <person name="Romine M.F."/>
            <person name="Culley D.E."/>
            <person name="Serres M."/>
            <person name="Chertkov O."/>
            <person name="Brettin T."/>
            <person name="Bruce D."/>
            <person name="Han C."/>
            <person name="Tapia R."/>
            <person name="Gilna P."/>
            <person name="Schmutz J."/>
            <person name="Larimer F."/>
            <person name="Land M."/>
            <person name="Hauser L."/>
            <person name="Kyrpides N."/>
            <person name="Mikhailova N."/>
            <person name="Richardson P."/>
        </authorList>
    </citation>
    <scope>NUCLEOTIDE SEQUENCE [LARGE SCALE GENOMIC DNA]</scope>
    <source>
        <strain>NCIMB 400</strain>
    </source>
</reference>
<proteinExistence type="inferred from homology"/>
<sequence length="766" mass="88019">MQIRYFLALSLLPNIVLADEPTTTEAPSLQCVVAPPVSRSFEDREALTGISDDQIVIISDHSSVAYNNQAEFSGDVSFSQGLRHIAADNAVLDQKEQRLNADGNLIFKDELFTVTADTLEAQMSTNNATLKGAQYWLHGQQVHGDAEKLQITSDNNLLLTKTNFTTCPPGDESWLLEADMIKIDSKEEWGEIWNAKLRIANIPVLYIPYMTVPVSDKRKTGFLFPSFSTSTTNGVEVSTPYYWNIAPEFDLTFTPDFMSSRGLYTKTEFRYLAGEQQNGQFNVEYLGSDSKLTSNADRYLYHWSHQGAVNKNWRVRSDYTDVSDNNYFNDLNSDVNQSTDNQLSRIGEASYFERDWDFNMRVQDIKVLGEDEKPYQVMPQLNFNYRSADIFNTIDFKFNSELTNFRHQDNEYNTATRLHLVPSLIWPIQGPAGSFTSEVKLLQTQYWQQNIDEDSTLNDSISRTIPQARLHGQVNFERATQLFDEQYRQTLEPQIQYLYVGYEDQSNIGIYDTAQLQEDYYGLFRDRQYSGLDRVADANQFTLGFTTRLFDQTNREKLKFSVGQIMYLEDSKVSIDDTYEETAQSTSVLAAELDAQLYNDWFVSGSVQHDTETGENKKNEVTLDYRPSSDRLLQLSYRYVPDLLNTNTNDQVDISQAGVRTSWPISDNLYFVGNYYYDLNESRNIETYTGVQYESCCWALRLSYHYRIKTNYDDDLSESIDGREEFESGVYLNFVIKGLGGSGPLGVDDMLNEGLFNYRKPLYLRN</sequence>
<organism>
    <name type="scientific">Shewanella frigidimarina (strain NCIMB 400)</name>
    <dbReference type="NCBI Taxonomy" id="318167"/>
    <lineage>
        <taxon>Bacteria</taxon>
        <taxon>Pseudomonadati</taxon>
        <taxon>Pseudomonadota</taxon>
        <taxon>Gammaproteobacteria</taxon>
        <taxon>Alteromonadales</taxon>
        <taxon>Shewanellaceae</taxon>
        <taxon>Shewanella</taxon>
    </lineage>
</organism>
<accession>Q07YK1</accession>
<comment type="function">
    <text evidence="1">Together with LptE, is involved in the assembly of lipopolysaccharide (LPS) at the surface of the outer membrane.</text>
</comment>
<comment type="subunit">
    <text evidence="1">Component of the lipopolysaccharide transport and assembly complex. Interacts with LptE and LptA.</text>
</comment>
<comment type="subcellular location">
    <subcellularLocation>
        <location evidence="1">Cell outer membrane</location>
    </subcellularLocation>
</comment>
<comment type="similarity">
    <text evidence="1">Belongs to the LptD family.</text>
</comment>
<name>LPTD_SHEFN</name>
<keyword id="KW-0998">Cell outer membrane</keyword>
<keyword id="KW-0472">Membrane</keyword>
<keyword id="KW-1185">Reference proteome</keyword>
<keyword id="KW-0732">Signal</keyword>